<name>RS5_TROWT</name>
<dbReference type="EMBL" id="AE014184">
    <property type="protein sequence ID" value="AAO44635.1"/>
    <property type="status" value="ALT_INIT"/>
    <property type="molecule type" value="Genomic_DNA"/>
</dbReference>
<dbReference type="SMR" id="Q83G02"/>
<dbReference type="STRING" id="203267.TWT_538"/>
<dbReference type="KEGG" id="twh:TWT_538"/>
<dbReference type="eggNOG" id="COG0098">
    <property type="taxonomic scope" value="Bacteria"/>
</dbReference>
<dbReference type="HOGENOM" id="CLU_065898_1_0_11"/>
<dbReference type="Proteomes" id="UP000002200">
    <property type="component" value="Chromosome"/>
</dbReference>
<dbReference type="GO" id="GO:0015935">
    <property type="term" value="C:small ribosomal subunit"/>
    <property type="evidence" value="ECO:0007669"/>
    <property type="project" value="InterPro"/>
</dbReference>
<dbReference type="GO" id="GO:0019843">
    <property type="term" value="F:rRNA binding"/>
    <property type="evidence" value="ECO:0007669"/>
    <property type="project" value="UniProtKB-UniRule"/>
</dbReference>
<dbReference type="GO" id="GO:0003735">
    <property type="term" value="F:structural constituent of ribosome"/>
    <property type="evidence" value="ECO:0007669"/>
    <property type="project" value="InterPro"/>
</dbReference>
<dbReference type="GO" id="GO:0006412">
    <property type="term" value="P:translation"/>
    <property type="evidence" value="ECO:0007669"/>
    <property type="project" value="UniProtKB-UniRule"/>
</dbReference>
<dbReference type="FunFam" id="3.30.160.20:FF:000001">
    <property type="entry name" value="30S ribosomal protein S5"/>
    <property type="match status" value="1"/>
</dbReference>
<dbReference type="FunFam" id="3.30.230.10:FF:000002">
    <property type="entry name" value="30S ribosomal protein S5"/>
    <property type="match status" value="1"/>
</dbReference>
<dbReference type="Gene3D" id="3.30.160.20">
    <property type="match status" value="1"/>
</dbReference>
<dbReference type="Gene3D" id="3.30.230.10">
    <property type="match status" value="1"/>
</dbReference>
<dbReference type="HAMAP" id="MF_01307_B">
    <property type="entry name" value="Ribosomal_uS5_B"/>
    <property type="match status" value="1"/>
</dbReference>
<dbReference type="InterPro" id="IPR020568">
    <property type="entry name" value="Ribosomal_Su5_D2-typ_SF"/>
</dbReference>
<dbReference type="InterPro" id="IPR000851">
    <property type="entry name" value="Ribosomal_uS5"/>
</dbReference>
<dbReference type="InterPro" id="IPR005712">
    <property type="entry name" value="Ribosomal_uS5_bac-type"/>
</dbReference>
<dbReference type="InterPro" id="IPR005324">
    <property type="entry name" value="Ribosomal_uS5_C"/>
</dbReference>
<dbReference type="InterPro" id="IPR013810">
    <property type="entry name" value="Ribosomal_uS5_N"/>
</dbReference>
<dbReference type="InterPro" id="IPR018192">
    <property type="entry name" value="Ribosomal_uS5_N_CS"/>
</dbReference>
<dbReference type="InterPro" id="IPR014721">
    <property type="entry name" value="Ribsml_uS5_D2-typ_fold_subgr"/>
</dbReference>
<dbReference type="NCBIfam" id="TIGR01021">
    <property type="entry name" value="rpsE_bact"/>
    <property type="match status" value="1"/>
</dbReference>
<dbReference type="PANTHER" id="PTHR48277">
    <property type="entry name" value="MITOCHONDRIAL RIBOSOMAL PROTEIN S5"/>
    <property type="match status" value="1"/>
</dbReference>
<dbReference type="PANTHER" id="PTHR48277:SF1">
    <property type="entry name" value="MITOCHONDRIAL RIBOSOMAL PROTEIN S5"/>
    <property type="match status" value="1"/>
</dbReference>
<dbReference type="Pfam" id="PF00333">
    <property type="entry name" value="Ribosomal_S5"/>
    <property type="match status" value="1"/>
</dbReference>
<dbReference type="Pfam" id="PF03719">
    <property type="entry name" value="Ribosomal_S5_C"/>
    <property type="match status" value="1"/>
</dbReference>
<dbReference type="SUPFAM" id="SSF54768">
    <property type="entry name" value="dsRNA-binding domain-like"/>
    <property type="match status" value="1"/>
</dbReference>
<dbReference type="SUPFAM" id="SSF54211">
    <property type="entry name" value="Ribosomal protein S5 domain 2-like"/>
    <property type="match status" value="1"/>
</dbReference>
<dbReference type="PROSITE" id="PS00585">
    <property type="entry name" value="RIBOSOMAL_S5"/>
    <property type="match status" value="1"/>
</dbReference>
<dbReference type="PROSITE" id="PS50881">
    <property type="entry name" value="S5_DSRBD"/>
    <property type="match status" value="1"/>
</dbReference>
<proteinExistence type="inferred from homology"/>
<keyword id="KW-1185">Reference proteome</keyword>
<keyword id="KW-0687">Ribonucleoprotein</keyword>
<keyword id="KW-0689">Ribosomal protein</keyword>
<keyword id="KW-0694">RNA-binding</keyword>
<keyword id="KW-0699">rRNA-binding</keyword>
<evidence type="ECO:0000255" key="1">
    <source>
        <dbReference type="HAMAP-Rule" id="MF_01307"/>
    </source>
</evidence>
<evidence type="ECO:0000256" key="2">
    <source>
        <dbReference type="SAM" id="MobiDB-lite"/>
    </source>
</evidence>
<evidence type="ECO:0000305" key="3"/>
<organism>
    <name type="scientific">Tropheryma whipplei (strain Twist)</name>
    <name type="common">Whipple's bacillus</name>
    <dbReference type="NCBI Taxonomy" id="203267"/>
    <lineage>
        <taxon>Bacteria</taxon>
        <taxon>Bacillati</taxon>
        <taxon>Actinomycetota</taxon>
        <taxon>Actinomycetes</taxon>
        <taxon>Micrococcales</taxon>
        <taxon>Tropherymataceae</taxon>
        <taxon>Tropheryma</taxon>
    </lineage>
</organism>
<protein>
    <recommendedName>
        <fullName evidence="1">Small ribosomal subunit protein uS5</fullName>
    </recommendedName>
    <alternativeName>
        <fullName evidence="3">30S ribosomal protein S5</fullName>
    </alternativeName>
</protein>
<accession>Q83G02</accession>
<sequence>MVRQSGSELSDQSDTDISADSDTSASEGSARHSARGRHRDSRQKGDSSSRGQFLERVVRINRVAKVVKGGRKFSFSALVVVGDGDGTVGVGYGKAREVPLAISKGIESARKNFFTVPRVASTIPHPVQGEAASGVVLLRPAAPGTGVIAGGPVRAVLECAGVRDVLSKSLGSSNSINVVYATLDALKHLEDPASVARRRGLDYYHVVPKRIVRAVNSVGASSDTA</sequence>
<reference key="1">
    <citation type="journal article" date="2003" name="Genome Res.">
        <title>Tropheryma whipplei twist: a human pathogenic Actinobacteria with a reduced genome.</title>
        <authorList>
            <person name="Raoult D."/>
            <person name="Ogata H."/>
            <person name="Audic S."/>
            <person name="Robert C."/>
            <person name="Suhre K."/>
            <person name="Drancourt M."/>
            <person name="Claverie J.-M."/>
        </authorList>
    </citation>
    <scope>NUCLEOTIDE SEQUENCE [LARGE SCALE GENOMIC DNA]</scope>
    <source>
        <strain>Twist</strain>
    </source>
</reference>
<comment type="function">
    <text evidence="1">With S4 and S12 plays an important role in translational accuracy.</text>
</comment>
<comment type="function">
    <text evidence="1">Located at the back of the 30S subunit body where it stabilizes the conformation of the head with respect to the body.</text>
</comment>
<comment type="subunit">
    <text evidence="1">Part of the 30S ribosomal subunit. Contacts proteins S4 and S8.</text>
</comment>
<comment type="domain">
    <text>The N-terminal domain interacts with the head of the 30S subunit; the C-terminal domain interacts with the body and contacts protein S4. The interaction surface between S4 and S5 is involved in control of translational fidelity.</text>
</comment>
<comment type="similarity">
    <text evidence="1">Belongs to the universal ribosomal protein uS5 family.</text>
</comment>
<comment type="sequence caution" evidence="3">
    <conflict type="erroneous initiation">
        <sequence resource="EMBL-CDS" id="AAO44635"/>
    </conflict>
</comment>
<gene>
    <name evidence="1" type="primary">rpsE</name>
    <name type="ordered locus">TWT_538</name>
</gene>
<feature type="chain" id="PRO_0000230380" description="Small ribosomal subunit protein uS5">
    <location>
        <begin position="1"/>
        <end position="225"/>
    </location>
</feature>
<feature type="domain" description="S5 DRBM" evidence="1">
    <location>
        <begin position="53"/>
        <end position="116"/>
    </location>
</feature>
<feature type="region of interest" description="Disordered" evidence="2">
    <location>
        <begin position="1"/>
        <end position="50"/>
    </location>
</feature>
<feature type="compositionally biased region" description="Basic residues" evidence="2">
    <location>
        <begin position="32"/>
        <end position="41"/>
    </location>
</feature>